<comment type="function">
    <text evidence="1">Hydrolyzes ribosome-free peptidyl-tRNAs (with 1 or more amino acids incorporated), which drop off the ribosome during protein synthesis, or as a result of ribosome stalling.</text>
</comment>
<comment type="function">
    <text evidence="1">Catalyzes the release of premature peptidyl moieties from peptidyl-tRNA molecules trapped in stalled 50S ribosomal subunits, and thus maintains levels of free tRNAs and 50S ribosomes.</text>
</comment>
<comment type="catalytic activity">
    <reaction evidence="1">
        <text>an N-acyl-L-alpha-aminoacyl-tRNA + H2O = an N-acyl-L-amino acid + a tRNA + H(+)</text>
        <dbReference type="Rhea" id="RHEA:54448"/>
        <dbReference type="Rhea" id="RHEA-COMP:10123"/>
        <dbReference type="Rhea" id="RHEA-COMP:13883"/>
        <dbReference type="ChEBI" id="CHEBI:15377"/>
        <dbReference type="ChEBI" id="CHEBI:15378"/>
        <dbReference type="ChEBI" id="CHEBI:59874"/>
        <dbReference type="ChEBI" id="CHEBI:78442"/>
        <dbReference type="ChEBI" id="CHEBI:138191"/>
        <dbReference type="EC" id="3.1.1.29"/>
    </reaction>
</comment>
<comment type="subunit">
    <text evidence="1">Monomer.</text>
</comment>
<comment type="subcellular location">
    <subcellularLocation>
        <location evidence="1">Cytoplasm</location>
    </subcellularLocation>
</comment>
<comment type="similarity">
    <text evidence="1">Belongs to the PTH family.</text>
</comment>
<name>PTH_LACP3</name>
<dbReference type="EC" id="3.1.1.29" evidence="1"/>
<dbReference type="EMBL" id="CP000423">
    <property type="protein sequence ID" value="ABJ71271.1"/>
    <property type="molecule type" value="Genomic_DNA"/>
</dbReference>
<dbReference type="RefSeq" id="WP_003596228.1">
    <property type="nucleotide sequence ID" value="NC_008526.1"/>
</dbReference>
<dbReference type="RefSeq" id="YP_807713.1">
    <property type="nucleotide sequence ID" value="NC_008526.1"/>
</dbReference>
<dbReference type="SMR" id="Q034V1"/>
<dbReference type="STRING" id="321967.LSEI_2548"/>
<dbReference type="PaxDb" id="321967-LSEI_2548"/>
<dbReference type="KEGG" id="lca:LSEI_2548"/>
<dbReference type="PATRIC" id="fig|321967.11.peg.2489"/>
<dbReference type="HOGENOM" id="CLU_062456_4_1_9"/>
<dbReference type="Proteomes" id="UP000001651">
    <property type="component" value="Chromosome"/>
</dbReference>
<dbReference type="GO" id="GO:0005737">
    <property type="term" value="C:cytoplasm"/>
    <property type="evidence" value="ECO:0007669"/>
    <property type="project" value="UniProtKB-SubCell"/>
</dbReference>
<dbReference type="GO" id="GO:0004045">
    <property type="term" value="F:peptidyl-tRNA hydrolase activity"/>
    <property type="evidence" value="ECO:0007669"/>
    <property type="project" value="UniProtKB-UniRule"/>
</dbReference>
<dbReference type="GO" id="GO:0000049">
    <property type="term" value="F:tRNA binding"/>
    <property type="evidence" value="ECO:0007669"/>
    <property type="project" value="UniProtKB-UniRule"/>
</dbReference>
<dbReference type="GO" id="GO:0006515">
    <property type="term" value="P:protein quality control for misfolded or incompletely synthesized proteins"/>
    <property type="evidence" value="ECO:0007669"/>
    <property type="project" value="UniProtKB-UniRule"/>
</dbReference>
<dbReference type="GO" id="GO:0072344">
    <property type="term" value="P:rescue of stalled ribosome"/>
    <property type="evidence" value="ECO:0007669"/>
    <property type="project" value="UniProtKB-UniRule"/>
</dbReference>
<dbReference type="CDD" id="cd00462">
    <property type="entry name" value="PTH"/>
    <property type="match status" value="1"/>
</dbReference>
<dbReference type="FunFam" id="3.40.50.1470:FF:000001">
    <property type="entry name" value="Peptidyl-tRNA hydrolase"/>
    <property type="match status" value="1"/>
</dbReference>
<dbReference type="Gene3D" id="3.40.50.1470">
    <property type="entry name" value="Peptidyl-tRNA hydrolase"/>
    <property type="match status" value="1"/>
</dbReference>
<dbReference type="HAMAP" id="MF_00083">
    <property type="entry name" value="Pept_tRNA_hydro_bact"/>
    <property type="match status" value="1"/>
</dbReference>
<dbReference type="InterPro" id="IPR001328">
    <property type="entry name" value="Pept_tRNA_hydro"/>
</dbReference>
<dbReference type="InterPro" id="IPR018171">
    <property type="entry name" value="Pept_tRNA_hydro_CS"/>
</dbReference>
<dbReference type="InterPro" id="IPR036416">
    <property type="entry name" value="Pept_tRNA_hydro_sf"/>
</dbReference>
<dbReference type="NCBIfam" id="TIGR00447">
    <property type="entry name" value="pth"/>
    <property type="match status" value="1"/>
</dbReference>
<dbReference type="PANTHER" id="PTHR17224">
    <property type="entry name" value="PEPTIDYL-TRNA HYDROLASE"/>
    <property type="match status" value="1"/>
</dbReference>
<dbReference type="PANTHER" id="PTHR17224:SF1">
    <property type="entry name" value="PEPTIDYL-TRNA HYDROLASE"/>
    <property type="match status" value="1"/>
</dbReference>
<dbReference type="Pfam" id="PF01195">
    <property type="entry name" value="Pept_tRNA_hydro"/>
    <property type="match status" value="1"/>
</dbReference>
<dbReference type="SUPFAM" id="SSF53178">
    <property type="entry name" value="Peptidyl-tRNA hydrolase-like"/>
    <property type="match status" value="1"/>
</dbReference>
<dbReference type="PROSITE" id="PS01196">
    <property type="entry name" value="PEPT_TRNA_HYDROL_2"/>
    <property type="match status" value="1"/>
</dbReference>
<reference key="1">
    <citation type="journal article" date="2006" name="Proc. Natl. Acad. Sci. U.S.A.">
        <title>Comparative genomics of the lactic acid bacteria.</title>
        <authorList>
            <person name="Makarova K.S."/>
            <person name="Slesarev A."/>
            <person name="Wolf Y.I."/>
            <person name="Sorokin A."/>
            <person name="Mirkin B."/>
            <person name="Koonin E.V."/>
            <person name="Pavlov A."/>
            <person name="Pavlova N."/>
            <person name="Karamychev V."/>
            <person name="Polouchine N."/>
            <person name="Shakhova V."/>
            <person name="Grigoriev I."/>
            <person name="Lou Y."/>
            <person name="Rohksar D."/>
            <person name="Lucas S."/>
            <person name="Huang K."/>
            <person name="Goodstein D.M."/>
            <person name="Hawkins T."/>
            <person name="Plengvidhya V."/>
            <person name="Welker D."/>
            <person name="Hughes J."/>
            <person name="Goh Y."/>
            <person name="Benson A."/>
            <person name="Baldwin K."/>
            <person name="Lee J.-H."/>
            <person name="Diaz-Muniz I."/>
            <person name="Dosti B."/>
            <person name="Smeianov V."/>
            <person name="Wechter W."/>
            <person name="Barabote R."/>
            <person name="Lorca G."/>
            <person name="Altermann E."/>
            <person name="Barrangou R."/>
            <person name="Ganesan B."/>
            <person name="Xie Y."/>
            <person name="Rawsthorne H."/>
            <person name="Tamir D."/>
            <person name="Parker C."/>
            <person name="Breidt F."/>
            <person name="Broadbent J.R."/>
            <person name="Hutkins R."/>
            <person name="O'Sullivan D."/>
            <person name="Steele J."/>
            <person name="Unlu G."/>
            <person name="Saier M.H. Jr."/>
            <person name="Klaenhammer T."/>
            <person name="Richardson P."/>
            <person name="Kozyavkin S."/>
            <person name="Weimer B.C."/>
            <person name="Mills D.A."/>
        </authorList>
    </citation>
    <scope>NUCLEOTIDE SEQUENCE [LARGE SCALE GENOMIC DNA]</scope>
    <source>
        <strain>ATCC 334 / BCRC 17002 / CCUG 31169 / CIP 107868 / KCTC 3260 / NRRL B-441</strain>
    </source>
</reference>
<accession>Q034V1</accession>
<evidence type="ECO:0000255" key="1">
    <source>
        <dbReference type="HAMAP-Rule" id="MF_00083"/>
    </source>
</evidence>
<keyword id="KW-0963">Cytoplasm</keyword>
<keyword id="KW-0378">Hydrolase</keyword>
<keyword id="KW-1185">Reference proteome</keyword>
<keyword id="KW-0694">RNA-binding</keyword>
<keyword id="KW-0820">tRNA-binding</keyword>
<feature type="chain" id="PRO_1000010599" description="Peptidyl-tRNA hydrolase">
    <location>
        <begin position="1"/>
        <end position="185"/>
    </location>
</feature>
<feature type="active site" description="Proton acceptor" evidence="1">
    <location>
        <position position="19"/>
    </location>
</feature>
<feature type="binding site" evidence="1">
    <location>
        <position position="14"/>
    </location>
    <ligand>
        <name>tRNA</name>
        <dbReference type="ChEBI" id="CHEBI:17843"/>
    </ligand>
</feature>
<feature type="binding site" evidence="1">
    <location>
        <position position="64"/>
    </location>
    <ligand>
        <name>tRNA</name>
        <dbReference type="ChEBI" id="CHEBI:17843"/>
    </ligand>
</feature>
<feature type="binding site" evidence="1">
    <location>
        <position position="66"/>
    </location>
    <ligand>
        <name>tRNA</name>
        <dbReference type="ChEBI" id="CHEBI:17843"/>
    </ligand>
</feature>
<feature type="binding site" evidence="1">
    <location>
        <position position="112"/>
    </location>
    <ligand>
        <name>tRNA</name>
        <dbReference type="ChEBI" id="CHEBI:17843"/>
    </ligand>
</feature>
<feature type="site" description="Discriminates between blocked and unblocked aminoacyl-tRNA" evidence="1">
    <location>
        <position position="9"/>
    </location>
</feature>
<feature type="site" description="Stabilizes the basic form of H active site to accept a proton" evidence="1">
    <location>
        <position position="91"/>
    </location>
</feature>
<proteinExistence type="inferred from homology"/>
<gene>
    <name evidence="1" type="primary">pth</name>
    <name type="ordered locus">LSEI_2548</name>
</gene>
<organism>
    <name type="scientific">Lacticaseibacillus paracasei (strain ATCC 334 / BCRC 17002 / CCUG 31169 / CIP 107868 / KCTC 3260 / NRRL B-441)</name>
    <name type="common">Lactobacillus paracasei</name>
    <dbReference type="NCBI Taxonomy" id="321967"/>
    <lineage>
        <taxon>Bacteria</taxon>
        <taxon>Bacillati</taxon>
        <taxon>Bacillota</taxon>
        <taxon>Bacilli</taxon>
        <taxon>Lactobacillales</taxon>
        <taxon>Lactobacillaceae</taxon>
        <taxon>Lacticaseibacillus</taxon>
    </lineage>
</organism>
<protein>
    <recommendedName>
        <fullName evidence="1">Peptidyl-tRNA hydrolase</fullName>
        <shortName evidence="1">Pth</shortName>
        <ecNumber evidence="1">3.1.1.29</ecNumber>
    </recommendedName>
</protein>
<sequence length="185" mass="20820">MKMIVGLGNPGQKYAGSKHNMGFMVVDGLAKRLNLTIDKLEFDAATATTRLNGEKIFLVKPQTFMNASGRAVRELMMFYQIQLDEIFVVQDDMDLTLGKLRLRKRGSAGGHNGIKDIISATGSDEFCRLKIGIQHPKRQRVVDWVLTPFSKTDQPLIDDAIEKADDALEDWLNGMPFDQLMNKFN</sequence>